<reference key="1">
    <citation type="journal article" date="2001" name="Science">
        <title>Mechanisms of evolution in Rickettsia conorii and R. prowazekii.</title>
        <authorList>
            <person name="Ogata H."/>
            <person name="Audic S."/>
            <person name="Renesto-Audiffren P."/>
            <person name="Fournier P.-E."/>
            <person name="Barbe V."/>
            <person name="Samson D."/>
            <person name="Roux V."/>
            <person name="Cossart P."/>
            <person name="Weissenbach J."/>
            <person name="Claverie J.-M."/>
            <person name="Raoult D."/>
        </authorList>
    </citation>
    <scope>NUCLEOTIDE SEQUENCE [LARGE SCALE GENOMIC DNA]</scope>
    <source>
        <strain>ATCC VR-613 / Malish 7</strain>
    </source>
</reference>
<protein>
    <recommendedName>
        <fullName>Replicative DNA helicase DnaB</fullName>
        <ecNumber evidence="1">5.6.2.3</ecNumber>
    </recommendedName>
    <alternativeName>
        <fullName evidence="3">DNA 5'-3' helicase DnaB</fullName>
    </alternativeName>
</protein>
<organism>
    <name type="scientific">Rickettsia conorii (strain ATCC VR-613 / Malish 7)</name>
    <dbReference type="NCBI Taxonomy" id="272944"/>
    <lineage>
        <taxon>Bacteria</taxon>
        <taxon>Pseudomonadati</taxon>
        <taxon>Pseudomonadota</taxon>
        <taxon>Alphaproteobacteria</taxon>
        <taxon>Rickettsiales</taxon>
        <taxon>Rickettsiaceae</taxon>
        <taxon>Rickettsieae</taxon>
        <taxon>Rickettsia</taxon>
        <taxon>spotted fever group</taxon>
    </lineage>
</organism>
<accession>Q92HG8</accession>
<name>DNAB_RICCN</name>
<gene>
    <name type="primary">dnaB</name>
    <name type="ordered locus">RC0803</name>
</gene>
<dbReference type="EC" id="5.6.2.3" evidence="1"/>
<dbReference type="EMBL" id="AE006914">
    <property type="protein sequence ID" value="AAL03341.1"/>
    <property type="molecule type" value="Genomic_DNA"/>
</dbReference>
<dbReference type="PIR" id="C97800">
    <property type="entry name" value="C97800"/>
</dbReference>
<dbReference type="RefSeq" id="WP_004998193.1">
    <property type="nucleotide sequence ID" value="NC_003103.1"/>
</dbReference>
<dbReference type="SMR" id="Q92HG8"/>
<dbReference type="KEGG" id="rco:RC0803"/>
<dbReference type="HOGENOM" id="CLU_005373_0_2_5"/>
<dbReference type="Proteomes" id="UP000000816">
    <property type="component" value="Chromosome"/>
</dbReference>
<dbReference type="GO" id="GO:0005829">
    <property type="term" value="C:cytosol"/>
    <property type="evidence" value="ECO:0007669"/>
    <property type="project" value="TreeGrafter"/>
</dbReference>
<dbReference type="GO" id="GO:1990077">
    <property type="term" value="C:primosome complex"/>
    <property type="evidence" value="ECO:0007669"/>
    <property type="project" value="UniProtKB-KW"/>
</dbReference>
<dbReference type="GO" id="GO:0005524">
    <property type="term" value="F:ATP binding"/>
    <property type="evidence" value="ECO:0007669"/>
    <property type="project" value="UniProtKB-KW"/>
</dbReference>
<dbReference type="GO" id="GO:0016887">
    <property type="term" value="F:ATP hydrolysis activity"/>
    <property type="evidence" value="ECO:0007669"/>
    <property type="project" value="RHEA"/>
</dbReference>
<dbReference type="GO" id="GO:0003677">
    <property type="term" value="F:DNA binding"/>
    <property type="evidence" value="ECO:0007669"/>
    <property type="project" value="UniProtKB-KW"/>
</dbReference>
<dbReference type="GO" id="GO:0003678">
    <property type="term" value="F:DNA helicase activity"/>
    <property type="evidence" value="ECO:0007669"/>
    <property type="project" value="InterPro"/>
</dbReference>
<dbReference type="GO" id="GO:0006269">
    <property type="term" value="P:DNA replication, synthesis of primer"/>
    <property type="evidence" value="ECO:0007669"/>
    <property type="project" value="UniProtKB-KW"/>
</dbReference>
<dbReference type="CDD" id="cd00984">
    <property type="entry name" value="DnaB_C"/>
    <property type="match status" value="1"/>
</dbReference>
<dbReference type="Gene3D" id="1.10.860.10">
    <property type="entry name" value="DNAb Helicase, Chain A"/>
    <property type="match status" value="1"/>
</dbReference>
<dbReference type="Gene3D" id="3.40.50.300">
    <property type="entry name" value="P-loop containing nucleotide triphosphate hydrolases"/>
    <property type="match status" value="1"/>
</dbReference>
<dbReference type="InterPro" id="IPR036185">
    <property type="entry name" value="DNA_heli_DnaB-like_N_sf"/>
</dbReference>
<dbReference type="InterPro" id="IPR007692">
    <property type="entry name" value="DNA_helicase_DnaB"/>
</dbReference>
<dbReference type="InterPro" id="IPR007694">
    <property type="entry name" value="DNA_helicase_DnaB-like_C"/>
</dbReference>
<dbReference type="InterPro" id="IPR007693">
    <property type="entry name" value="DNA_helicase_DnaB-like_N"/>
</dbReference>
<dbReference type="InterPro" id="IPR016136">
    <property type="entry name" value="DNA_helicase_N/primase_C"/>
</dbReference>
<dbReference type="InterPro" id="IPR027417">
    <property type="entry name" value="P-loop_NTPase"/>
</dbReference>
<dbReference type="NCBIfam" id="TIGR00665">
    <property type="entry name" value="DnaB"/>
    <property type="match status" value="1"/>
</dbReference>
<dbReference type="NCBIfam" id="NF006606">
    <property type="entry name" value="PRK09165.1"/>
    <property type="match status" value="1"/>
</dbReference>
<dbReference type="PANTHER" id="PTHR30153:SF2">
    <property type="entry name" value="REPLICATIVE DNA HELICASE"/>
    <property type="match status" value="1"/>
</dbReference>
<dbReference type="PANTHER" id="PTHR30153">
    <property type="entry name" value="REPLICATIVE DNA HELICASE DNAB"/>
    <property type="match status" value="1"/>
</dbReference>
<dbReference type="Pfam" id="PF00772">
    <property type="entry name" value="DnaB"/>
    <property type="match status" value="1"/>
</dbReference>
<dbReference type="Pfam" id="PF03796">
    <property type="entry name" value="DnaB_C"/>
    <property type="match status" value="1"/>
</dbReference>
<dbReference type="SUPFAM" id="SSF48024">
    <property type="entry name" value="N-terminal domain of DnaB helicase"/>
    <property type="match status" value="1"/>
</dbReference>
<dbReference type="SUPFAM" id="SSF52540">
    <property type="entry name" value="P-loop containing nucleoside triphosphate hydrolases"/>
    <property type="match status" value="1"/>
</dbReference>
<dbReference type="PROSITE" id="PS51199">
    <property type="entry name" value="SF4_HELICASE"/>
    <property type="match status" value="1"/>
</dbReference>
<feature type="chain" id="PRO_0000102028" description="Replicative DNA helicase DnaB">
    <location>
        <begin position="1"/>
        <end position="494"/>
    </location>
</feature>
<feature type="domain" description="SF4 helicase" evidence="2">
    <location>
        <begin position="198"/>
        <end position="490"/>
    </location>
</feature>
<feature type="binding site" evidence="2">
    <location>
        <begin position="229"/>
        <end position="236"/>
    </location>
    <ligand>
        <name>ATP</name>
        <dbReference type="ChEBI" id="CHEBI:30616"/>
    </ligand>
</feature>
<keyword id="KW-0067">ATP-binding</keyword>
<keyword id="KW-0235">DNA replication</keyword>
<keyword id="KW-0238">DNA-binding</keyword>
<keyword id="KW-0347">Helicase</keyword>
<keyword id="KW-0378">Hydrolase</keyword>
<keyword id="KW-0413">Isomerase</keyword>
<keyword id="KW-0547">Nucleotide-binding</keyword>
<keyword id="KW-0639">Primosome</keyword>
<sequence length="494" mass="55756">MARNKINNETNILADNEDNLPIPRVLPSNVQAEQMLLGAILTNNELLNYVSEFLRDEHFFEPIHQKIYKAIEKITEKGLTATPITLRSMLTQDELFQEVEGAEYLAKLITMSMMVINPLDYGKIIYDLAIKRNLINIGEEVVNNAYNSSLEVEAKEQIEHAEAKLYDLASEGLNEKSFTKIGISISESLASINRAMKNNDHIIGISTGLIDLDNKLCGFHNSDLIILAGRPSMGKTAFAINLALNACNNMRLKNIRDNQEIQSVGFFSLEMSSEQLTTRLLSMCAEIDSTSLRTGILGEEKYNRLRKEANTLSELQFFIDDTPALSISAIRTRARRMKRKHNLGILFIDYLQLIRGVSKSENRVSEISEITQGLKAIAKELNIPVIALSQLSRAVELREDKKPMLSDLRESGTIEQDADIVMFIYREEYYLTRKEPAAGDAKHAAWLDKLNKVYNIADIIVAKHRNGPVGNVPLYYDSQFSKFGNLETRTFNSN</sequence>
<evidence type="ECO:0000250" key="1">
    <source>
        <dbReference type="UniProtKB" id="P0ACB0"/>
    </source>
</evidence>
<evidence type="ECO:0000255" key="2">
    <source>
        <dbReference type="PROSITE-ProRule" id="PRU00596"/>
    </source>
</evidence>
<evidence type="ECO:0000305" key="3"/>
<proteinExistence type="inferred from homology"/>
<comment type="function">
    <text evidence="1">The main replicative DNA helicase, it participates in initiation and elongation during chromosome replication. Travels ahead of the DNA replisome, separating dsDNA into templates for DNA synthesis. A processive ATP-dependent 5'-3' DNA helicase it has DNA-dependent ATPase activity.</text>
</comment>
<comment type="catalytic activity">
    <reaction evidence="1">
        <text>Couples ATP hydrolysis with the unwinding of duplex DNA at the replication fork by translocating in the 5'-3' direction. This creates two antiparallel DNA single strands (ssDNA). The leading ssDNA polymer is the template for DNA polymerase III holoenzyme which synthesizes a continuous strand.</text>
        <dbReference type="EC" id="5.6.2.3"/>
    </reaction>
</comment>
<comment type="catalytic activity">
    <reaction evidence="1">
        <text>ATP + H2O = ADP + phosphate + H(+)</text>
        <dbReference type="Rhea" id="RHEA:13065"/>
        <dbReference type="ChEBI" id="CHEBI:15377"/>
        <dbReference type="ChEBI" id="CHEBI:15378"/>
        <dbReference type="ChEBI" id="CHEBI:30616"/>
        <dbReference type="ChEBI" id="CHEBI:43474"/>
        <dbReference type="ChEBI" id="CHEBI:456216"/>
        <dbReference type="EC" id="5.6.2.3"/>
    </reaction>
</comment>
<comment type="subunit">
    <text evidence="1">Homohexamer.</text>
</comment>
<comment type="similarity">
    <text evidence="3">Belongs to the helicase family. DnaB subfamily.</text>
</comment>